<accession>Q5ZJA4</accession>
<reference key="1">
    <citation type="journal article" date="2005" name="Genome Biol.">
        <title>Full-length cDNAs from chicken bursal lymphocytes to facilitate gene function analysis.</title>
        <authorList>
            <person name="Caldwell R.B."/>
            <person name="Kierzek A.M."/>
            <person name="Arakawa H."/>
            <person name="Bezzubov Y."/>
            <person name="Zaim J."/>
            <person name="Fiedler P."/>
            <person name="Kutter S."/>
            <person name="Blagodatski A."/>
            <person name="Kostovska D."/>
            <person name="Koter M."/>
            <person name="Plachy J."/>
            <person name="Carninci P."/>
            <person name="Hayashizaki Y."/>
            <person name="Buerstedde J.-M."/>
        </authorList>
    </citation>
    <scope>NUCLEOTIDE SEQUENCE [LARGE SCALE MRNA]</scope>
    <source>
        <strain>CB</strain>
        <tissue>Bursa of Fabricius</tissue>
    </source>
</reference>
<keyword id="KW-0175">Coiled coil</keyword>
<keyword id="KW-0227">DNA damage</keyword>
<keyword id="KW-0233">DNA recombination</keyword>
<keyword id="KW-0234">DNA repair</keyword>
<keyword id="KW-0539">Nucleus</keyword>
<keyword id="KW-1185">Reference proteome</keyword>
<keyword id="KW-0804">Transcription</keyword>
<keyword id="KW-0805">Transcription regulation</keyword>
<comment type="function">
    <text evidence="1">Proposed core component of the chromatin remodeling INO80 complex which is involved in transcriptional regulation, DNA replication and probably DNA repair.</text>
</comment>
<comment type="subunit">
    <text evidence="1">Component of the chromatin remodeling INO80 complex.</text>
</comment>
<comment type="subcellular location">
    <subcellularLocation>
        <location evidence="2">Nucleus</location>
    </subcellularLocation>
</comment>
<comment type="similarity">
    <text evidence="4">Belongs to the actin family. ARP5 subfamily.</text>
</comment>
<proteinExistence type="evidence at transcript level"/>
<evidence type="ECO:0000250" key="1"/>
<evidence type="ECO:0000250" key="2">
    <source>
        <dbReference type="UniProtKB" id="Q9H9F9"/>
    </source>
</evidence>
<evidence type="ECO:0000255" key="3"/>
<evidence type="ECO:0000305" key="4"/>
<feature type="chain" id="PRO_0000247844" description="Actin-related protein 5">
    <location>
        <begin position="1"/>
        <end position="611"/>
    </location>
</feature>
<feature type="coiled-coil region" evidence="3">
    <location>
        <begin position="290"/>
        <end position="329"/>
    </location>
</feature>
<feature type="coiled-coil region" evidence="3">
    <location>
        <begin position="355"/>
        <end position="386"/>
    </location>
</feature>
<protein>
    <recommendedName>
        <fullName>Actin-related protein 5</fullName>
    </recommendedName>
</protein>
<name>ARP5_CHICK</name>
<sequence>MAAGRVFAFRDARWAPDPVLAPSAAVRSPQPVPLVIDNGSFQTRAGWAAADPSVPAEPLLRFRSLAARSRGARGGAGAETQVGNDLGSPEPLRWLLRSPFDRNVPVQLELQELLFDHVFQRLGVASQGCVDHPIVLTEAVCNPLYSRQMMSELLFECYQVPKVSYGVDSLYSFYHNRRQNWPCSGLVISSGYQCTHILPVLEGRLDAKNCKRINLGGCQAAVYLQRLLQLKYPGHFAAITLSRMEEILHEHSYIAEDYTEELQKWRSPEYYENNVHKMQLPFSNKLLGSTLTSEEKQERRQQQLRRLQELNARRREEKLQLDQERLDRLLYVQELLEDGQMDQFHKALVELNMDSAEELQSYINKLSLAIEQTKQKILQAEVNIEVDIVDSKPETPDLDPLSSEQSLEDVESINEFEPLFAEEQPEAEKPVAAVQPVFNLAEYHQLFLGTERIRAPEIIFQPSLIGEDQTGIAETMQYVLERYSKEQQALLVQNVFLTGGNAMYPGLKARVQKELLEMRPFQSSFQVHLASSPTLDAWYGARDWAVEHMTREEGWITRKDYEEKGGEYLKEHCASNVYVPIRLPKQAPRTTEALAPSRALAAGTGNPCEQA</sequence>
<dbReference type="EMBL" id="AJ720530">
    <property type="protein sequence ID" value="CAG32189.1"/>
    <property type="molecule type" value="mRNA"/>
</dbReference>
<dbReference type="RefSeq" id="NP_001008446.1">
    <property type="nucleotide sequence ID" value="NM_001008446.1"/>
</dbReference>
<dbReference type="SMR" id="Q5ZJA4"/>
<dbReference type="FunCoup" id="Q5ZJA4">
    <property type="interactions" value="1597"/>
</dbReference>
<dbReference type="STRING" id="9031.ENSGALP00000005624"/>
<dbReference type="PaxDb" id="9031-ENSGALP00000005624"/>
<dbReference type="GeneID" id="419169"/>
<dbReference type="KEGG" id="gga:419169"/>
<dbReference type="CTD" id="79913"/>
<dbReference type="VEuPathDB" id="HostDB:geneid_419169"/>
<dbReference type="eggNOG" id="KOG0681">
    <property type="taxonomic scope" value="Eukaryota"/>
</dbReference>
<dbReference type="HOGENOM" id="CLU_008246_2_0_1"/>
<dbReference type="InParanoid" id="Q5ZJA4"/>
<dbReference type="OrthoDB" id="7340501at2759"/>
<dbReference type="PhylomeDB" id="Q5ZJA4"/>
<dbReference type="TreeFam" id="TF324227"/>
<dbReference type="Reactome" id="R-GGA-5689603">
    <property type="pathway name" value="UCH proteinases"/>
</dbReference>
<dbReference type="Reactome" id="R-GGA-5696394">
    <property type="pathway name" value="DNA Damage Recognition in GG-NER"/>
</dbReference>
<dbReference type="PRO" id="PR:Q5ZJA4"/>
<dbReference type="Proteomes" id="UP000000539">
    <property type="component" value="Chromosome 20"/>
</dbReference>
<dbReference type="Bgee" id="ENSGALG00000003559">
    <property type="expression patterns" value="Expressed in testis and 13 other cell types or tissues"/>
</dbReference>
<dbReference type="GO" id="GO:0005737">
    <property type="term" value="C:cytoplasm"/>
    <property type="evidence" value="ECO:0000318"/>
    <property type="project" value="GO_Central"/>
</dbReference>
<dbReference type="GO" id="GO:0031011">
    <property type="term" value="C:Ino80 complex"/>
    <property type="evidence" value="ECO:0000318"/>
    <property type="project" value="GO_Central"/>
</dbReference>
<dbReference type="GO" id="GO:0006310">
    <property type="term" value="P:DNA recombination"/>
    <property type="evidence" value="ECO:0007669"/>
    <property type="project" value="UniProtKB-KW"/>
</dbReference>
<dbReference type="GO" id="GO:0006281">
    <property type="term" value="P:DNA repair"/>
    <property type="evidence" value="ECO:0007669"/>
    <property type="project" value="UniProtKB-KW"/>
</dbReference>
<dbReference type="GO" id="GO:0006355">
    <property type="term" value="P:regulation of DNA-templated transcription"/>
    <property type="evidence" value="ECO:0000318"/>
    <property type="project" value="GO_Central"/>
</dbReference>
<dbReference type="CDD" id="cd10211">
    <property type="entry name" value="ASKHA_NBD_Arp5"/>
    <property type="match status" value="1"/>
</dbReference>
<dbReference type="FunFam" id="3.30.420.40:FF:000048">
    <property type="entry name" value="ARP5 actin-related protein 5 homolog"/>
    <property type="match status" value="1"/>
</dbReference>
<dbReference type="FunFam" id="3.30.420.40:FF:000098">
    <property type="entry name" value="ARP5 actin-related protein 5 homolog"/>
    <property type="match status" value="1"/>
</dbReference>
<dbReference type="FunFam" id="3.30.420.40:FF:000122">
    <property type="entry name" value="ARP5 actin-related protein 5 homolog"/>
    <property type="match status" value="1"/>
</dbReference>
<dbReference type="FunFam" id="3.90.640.10:FF:000016">
    <property type="entry name" value="ARP5 actin-related protein 5 homolog"/>
    <property type="match status" value="1"/>
</dbReference>
<dbReference type="FunFam" id="3.90.640.10:FF:000019">
    <property type="entry name" value="ARP5 actin-related protein 5 homolog"/>
    <property type="match status" value="1"/>
</dbReference>
<dbReference type="FunFam" id="3.30.420.40:FF:000058">
    <property type="entry name" value="Putative actin-related protein 5"/>
    <property type="match status" value="1"/>
</dbReference>
<dbReference type="Gene3D" id="3.30.420.40">
    <property type="match status" value="4"/>
</dbReference>
<dbReference type="Gene3D" id="3.90.640.10">
    <property type="entry name" value="Actin, Chain A, domain 4"/>
    <property type="match status" value="2"/>
</dbReference>
<dbReference type="InterPro" id="IPR004000">
    <property type="entry name" value="Actin"/>
</dbReference>
<dbReference type="InterPro" id="IPR004001">
    <property type="entry name" value="Actin_CS"/>
</dbReference>
<dbReference type="InterPro" id="IPR043129">
    <property type="entry name" value="ATPase_NBD"/>
</dbReference>
<dbReference type="PANTHER" id="PTHR11937">
    <property type="entry name" value="ACTIN"/>
    <property type="match status" value="1"/>
</dbReference>
<dbReference type="Pfam" id="PF00022">
    <property type="entry name" value="Actin"/>
    <property type="match status" value="2"/>
</dbReference>
<dbReference type="SMART" id="SM00268">
    <property type="entry name" value="ACTIN"/>
    <property type="match status" value="1"/>
</dbReference>
<dbReference type="SUPFAM" id="SSF53067">
    <property type="entry name" value="Actin-like ATPase domain"/>
    <property type="match status" value="2"/>
</dbReference>
<dbReference type="PROSITE" id="PS00432">
    <property type="entry name" value="ACTINS_2"/>
    <property type="match status" value="1"/>
</dbReference>
<organism>
    <name type="scientific">Gallus gallus</name>
    <name type="common">Chicken</name>
    <dbReference type="NCBI Taxonomy" id="9031"/>
    <lineage>
        <taxon>Eukaryota</taxon>
        <taxon>Metazoa</taxon>
        <taxon>Chordata</taxon>
        <taxon>Craniata</taxon>
        <taxon>Vertebrata</taxon>
        <taxon>Euteleostomi</taxon>
        <taxon>Archelosauria</taxon>
        <taxon>Archosauria</taxon>
        <taxon>Dinosauria</taxon>
        <taxon>Saurischia</taxon>
        <taxon>Theropoda</taxon>
        <taxon>Coelurosauria</taxon>
        <taxon>Aves</taxon>
        <taxon>Neognathae</taxon>
        <taxon>Galloanserae</taxon>
        <taxon>Galliformes</taxon>
        <taxon>Phasianidae</taxon>
        <taxon>Phasianinae</taxon>
        <taxon>Gallus</taxon>
    </lineage>
</organism>
<gene>
    <name type="primary">ACTR5</name>
    <name type="ORF">RCJMB04_19k24</name>
</gene>